<sequence>MAKVRAALDRITDPSVKAVLNEEAYSHIRPVLRESLTNNPYAIAPDAADTLEKYGIATNPFAVKVHSHGAVKSIENTLLERVGFNLPKEPCTFLFLKRSKLRYLRRGPSNNDIFINLAIEPRDLQRYEEDTLVESWTRITTRYAYISDTFHFFTRKMLADLFFHNPALDVLYATLVLPPEALHKHPSIEPDLYTINYNFNGFQYIPGNHGGGSYSHEFKQLEWLKVGHLKSPELCLTFQMIESIGANHLFMITRGIKITPRVRTFTKDSYVLFPQIFHPRNLNPSKPFPKVKAMQLFTYVKSVKNPTERDIYAKIRQLIKTSELSDYHPDEIVHIVNYFVFISKLDSINSYSDILSLPIWSKALLPIKTKITQLWEKLTGARAFNQLLDALQWKTFTYPLEVVDSPQPLQTRDCFIEDERLEIDTLEDEIPPNPNDNTSMSPQSIEEAVKNNPDLPWAPWLLILQAHNADCTEKQYDPENNLILPIQEINTLPKHQHPDIPTDLLTLLTKLHREPTTVSLDNHRARAYGSDVKNLRIGALLKKQSKDWLASFALKTENIEREVLMSVIHGAGGSGKSHAIQTWMRSLNRRDRHVTIILPTTDLRNDWTNKVPNLEQANFKTFEKALCQPCGKIIVFDDYSKLPQGYIEAFLAINQNVILAILTGDSKQSFHHESNEDAYTATLEPSIITYQPFCRYYLNITHRNKPDLANKLGVYSCSSGTTSFTMSSQALKGMPILSPSIMKKTALGEMGQKSMTYAGCQGLTTKAVQILLDTNTPLCSSNVIYTALSRAVDHIHFINTGPNSTDFWEKLDSTPYLKTFLDCVREEKMNEIIAAEEPPTPVQAPTTHFPKVNPTTVIESYVHDLPEKHDREIFSETHGHSNAIQTDNPVVQLFPHQQAKDETLYWATIEARLQCTSSEENLKEFHLKHDIGDILFLNYKQAMNLPQDPIPFNPDLWTLCRQEIENTYLKKSAAALVNAATRQSPDFDSHAIALFLKSQWVKKTEKIGCLKIKAGQTIAAFMQQTVMIYGTMARYMRKFRNQYCPRKIFVNCETTPADFNSFILDEWNFNRTCFSNDFTAFDQSQDGSILQFEVIKAKFHNIPEDVIEGYIQIKTHAKIFLGTLSIMRLSGEGPTFDANTEANIAYTHTKFNIPCDAAQVYAGDDMSIDYVASVKPSFNMIEHLMKLKGKPVFNTQTQGDFAEFCGWTISPKGIIKKPEKMNMSIELQKNINKFHEVKRSYALDHAFAYQLGDELHELYNENEAEHHQLATRSLILAGQATALDILDYGLRDLK</sequence>
<reference key="1">
    <citation type="journal article" date="1990" name="Virology">
        <title>Infectious transcripts and nucleotide sequence of cloned cDNA of the potexvirus white clover mosaic virus.</title>
        <authorList>
            <person name="Beck D.L."/>
            <person name="Forster R.L.S."/>
            <person name="Bevan M.W."/>
            <person name="Boxen K.A."/>
            <person name="Lowe S.C."/>
            <person name="Gardner R.C."/>
        </authorList>
    </citation>
    <scope>NUCLEOTIDE SEQUENCE [GENOMIC RNA]</scope>
</reference>
<keyword id="KW-0067">ATP-binding</keyword>
<keyword id="KW-0347">Helicase</keyword>
<keyword id="KW-0378">Hydrolase</keyword>
<keyword id="KW-0511">Multifunctional enzyme</keyword>
<keyword id="KW-0547">Nucleotide-binding</keyword>
<keyword id="KW-0548">Nucleotidyltransferase</keyword>
<keyword id="KW-0696">RNA-directed RNA polymerase</keyword>
<keyword id="KW-0808">Transferase</keyword>
<keyword id="KW-0693">Viral RNA replication</keyword>
<proteinExistence type="inferred from homology"/>
<comment type="function">
    <text evidence="4">RNA replication. The central part of this protein possibly functions as an ATP-binding helicase (Probable).</text>
</comment>
<comment type="catalytic activity">
    <reaction evidence="2">
        <text>RNA(n) + a ribonucleoside 5'-triphosphate = RNA(n+1) + diphosphate</text>
        <dbReference type="Rhea" id="RHEA:21248"/>
        <dbReference type="Rhea" id="RHEA-COMP:14527"/>
        <dbReference type="Rhea" id="RHEA-COMP:17342"/>
        <dbReference type="ChEBI" id="CHEBI:33019"/>
        <dbReference type="ChEBI" id="CHEBI:61557"/>
        <dbReference type="ChEBI" id="CHEBI:140395"/>
        <dbReference type="EC" id="2.7.7.48"/>
    </reaction>
</comment>
<comment type="catalytic activity">
    <reaction>
        <text>ATP + H2O = ADP + phosphate + H(+)</text>
        <dbReference type="Rhea" id="RHEA:13065"/>
        <dbReference type="ChEBI" id="CHEBI:15377"/>
        <dbReference type="ChEBI" id="CHEBI:15378"/>
        <dbReference type="ChEBI" id="CHEBI:30616"/>
        <dbReference type="ChEBI" id="CHEBI:43474"/>
        <dbReference type="ChEBI" id="CHEBI:456216"/>
        <dbReference type="EC" id="3.6.4.13"/>
    </reaction>
</comment>
<comment type="similarity">
    <text evidence="4">Belongs to the potexvirus/carlavirus RNA replication protein family.</text>
</comment>
<name>RDRP_WCMVO</name>
<dbReference type="EC" id="2.7.7.48"/>
<dbReference type="EC" id="3.6.4.13"/>
<dbReference type="EMBL" id="X16636">
    <property type="protein sequence ID" value="CAA34628.1"/>
    <property type="molecule type" value="Genomic_RNA"/>
</dbReference>
<dbReference type="PIR" id="A46350">
    <property type="entry name" value="A46350"/>
</dbReference>
<dbReference type="Proteomes" id="UP000007628">
    <property type="component" value="Genome"/>
</dbReference>
<dbReference type="GO" id="GO:0005524">
    <property type="term" value="F:ATP binding"/>
    <property type="evidence" value="ECO:0007669"/>
    <property type="project" value="UniProtKB-KW"/>
</dbReference>
<dbReference type="GO" id="GO:0016887">
    <property type="term" value="F:ATP hydrolysis activity"/>
    <property type="evidence" value="ECO:0007669"/>
    <property type="project" value="RHEA"/>
</dbReference>
<dbReference type="GO" id="GO:0008174">
    <property type="term" value="F:mRNA methyltransferase activity"/>
    <property type="evidence" value="ECO:0007669"/>
    <property type="project" value="InterPro"/>
</dbReference>
<dbReference type="GO" id="GO:0003723">
    <property type="term" value="F:RNA binding"/>
    <property type="evidence" value="ECO:0007669"/>
    <property type="project" value="InterPro"/>
</dbReference>
<dbReference type="GO" id="GO:0003724">
    <property type="term" value="F:RNA helicase activity"/>
    <property type="evidence" value="ECO:0007669"/>
    <property type="project" value="UniProtKB-EC"/>
</dbReference>
<dbReference type="GO" id="GO:0003968">
    <property type="term" value="F:RNA-directed RNA polymerase activity"/>
    <property type="evidence" value="ECO:0007669"/>
    <property type="project" value="UniProtKB-KW"/>
</dbReference>
<dbReference type="GO" id="GO:0006351">
    <property type="term" value="P:DNA-templated transcription"/>
    <property type="evidence" value="ECO:0007669"/>
    <property type="project" value="InterPro"/>
</dbReference>
<dbReference type="GO" id="GO:0016556">
    <property type="term" value="P:mRNA modification"/>
    <property type="evidence" value="ECO:0007669"/>
    <property type="project" value="InterPro"/>
</dbReference>
<dbReference type="GO" id="GO:0006396">
    <property type="term" value="P:RNA processing"/>
    <property type="evidence" value="ECO:0007669"/>
    <property type="project" value="InterPro"/>
</dbReference>
<dbReference type="GO" id="GO:0039694">
    <property type="term" value="P:viral RNA genome replication"/>
    <property type="evidence" value="ECO:0007669"/>
    <property type="project" value="InterPro"/>
</dbReference>
<dbReference type="CDD" id="cd23246">
    <property type="entry name" value="Alphaflexiviridae_RdRp"/>
    <property type="match status" value="1"/>
</dbReference>
<dbReference type="Gene3D" id="3.40.50.300">
    <property type="entry name" value="P-loop containing nucleotide triphosphate hydrolases"/>
    <property type="match status" value="1"/>
</dbReference>
<dbReference type="InterPro" id="IPR027351">
    <property type="entry name" value="(+)RNA_virus_helicase_core_dom"/>
</dbReference>
<dbReference type="InterPro" id="IPR002588">
    <property type="entry name" value="Alphavirus-like_MT_dom"/>
</dbReference>
<dbReference type="InterPro" id="IPR043502">
    <property type="entry name" value="DNA/RNA_pol_sf"/>
</dbReference>
<dbReference type="InterPro" id="IPR027417">
    <property type="entry name" value="P-loop_NTPase"/>
</dbReference>
<dbReference type="InterPro" id="IPR001788">
    <property type="entry name" value="RNA-dep_RNA_pol_alsuvir"/>
</dbReference>
<dbReference type="InterPro" id="IPR007094">
    <property type="entry name" value="RNA-dir_pol_PSvirus"/>
</dbReference>
<dbReference type="Pfam" id="PF00978">
    <property type="entry name" value="RdRP_2"/>
    <property type="match status" value="1"/>
</dbReference>
<dbReference type="Pfam" id="PF01443">
    <property type="entry name" value="Viral_helicase1"/>
    <property type="match status" value="1"/>
</dbReference>
<dbReference type="Pfam" id="PF01660">
    <property type="entry name" value="Vmethyltransf"/>
    <property type="match status" value="1"/>
</dbReference>
<dbReference type="SUPFAM" id="SSF56672">
    <property type="entry name" value="DNA/RNA polymerases"/>
    <property type="match status" value="1"/>
</dbReference>
<dbReference type="SUPFAM" id="SSF52540">
    <property type="entry name" value="P-loop containing nucleoside triphosphate hydrolases"/>
    <property type="match status" value="2"/>
</dbReference>
<dbReference type="PROSITE" id="PS51743">
    <property type="entry name" value="ALPHAVIRUS_MT"/>
    <property type="match status" value="1"/>
</dbReference>
<dbReference type="PROSITE" id="PS51657">
    <property type="entry name" value="PSRV_HELICASE"/>
    <property type="match status" value="1"/>
</dbReference>
<dbReference type="PROSITE" id="PS50507">
    <property type="entry name" value="RDRP_SSRNA_POS"/>
    <property type="match status" value="1"/>
</dbReference>
<protein>
    <recommendedName>
        <fullName>RNA replication protein</fullName>
    </recommendedName>
    <alternativeName>
        <fullName>147 kDa protein</fullName>
    </alternativeName>
    <alternativeName>
        <fullName>ORF1 protein</fullName>
    </alternativeName>
    <domain>
        <recommendedName>
            <fullName>RNA-directed RNA polymerase</fullName>
            <ecNumber>2.7.7.48</ecNumber>
        </recommendedName>
    </domain>
    <domain>
        <recommendedName>
            <fullName>Helicase</fullName>
            <ecNumber>3.6.4.13</ecNumber>
        </recommendedName>
    </domain>
</protein>
<accession>P15402</accession>
<feature type="chain" id="PRO_0000222559" description="RNA replication protein">
    <location>
        <begin position="1"/>
        <end position="1294"/>
    </location>
</feature>
<feature type="domain" description="Alphavirus-like MT" evidence="3">
    <location>
        <begin position="59"/>
        <end position="224"/>
    </location>
</feature>
<feature type="domain" description="(+)RNA virus helicase ATP-binding">
    <location>
        <begin position="541"/>
        <end position="698"/>
    </location>
</feature>
<feature type="domain" description="(+)RNA virus helicase C-terminal">
    <location>
        <begin position="699"/>
        <end position="832"/>
    </location>
</feature>
<feature type="domain" description="RdRp catalytic" evidence="2">
    <location>
        <begin position="1071"/>
        <end position="1178"/>
    </location>
</feature>
<feature type="binding site" evidence="1">
    <location>
        <begin position="570"/>
        <end position="577"/>
    </location>
    <ligand>
        <name>ATP</name>
        <dbReference type="ChEBI" id="CHEBI:30616"/>
    </ligand>
</feature>
<organismHost>
    <name type="scientific">Trifolium</name>
    <dbReference type="NCBI Taxonomy" id="3898"/>
</organismHost>
<organism>
    <name type="scientific">White clover mosaic virus (strain O)</name>
    <name type="common">WCMV</name>
    <dbReference type="NCBI Taxonomy" id="12190"/>
    <lineage>
        <taxon>Viruses</taxon>
        <taxon>Riboviria</taxon>
        <taxon>Orthornavirae</taxon>
        <taxon>Kitrinoviricota</taxon>
        <taxon>Alsuviricetes</taxon>
        <taxon>Tymovirales</taxon>
        <taxon>Alphaflexiviridae</taxon>
        <taxon>Potexvirus</taxon>
        <taxon>White clover mosaic virus</taxon>
    </lineage>
</organism>
<evidence type="ECO:0000255" key="1"/>
<evidence type="ECO:0000255" key="2">
    <source>
        <dbReference type="PROSITE-ProRule" id="PRU00539"/>
    </source>
</evidence>
<evidence type="ECO:0000255" key="3">
    <source>
        <dbReference type="PROSITE-ProRule" id="PRU01079"/>
    </source>
</evidence>
<evidence type="ECO:0000305" key="4"/>